<accession>P43088</accession>
<accession>A8K9Y0</accession>
<accession>Q2KHP3</accession>
<accession>Q6RYQ6</accession>
<accession>Q9P1X4</accession>
<name>PF2R_HUMAN</name>
<protein>
    <recommendedName>
        <fullName>Prostaglandin F2-alpha receptor</fullName>
        <shortName>PGF receptor</shortName>
        <shortName>PGF2-alpha receptor</shortName>
    </recommendedName>
    <alternativeName>
        <fullName>Prostanoid FP receptor</fullName>
    </alternativeName>
</protein>
<proteinExistence type="evidence at protein level"/>
<dbReference type="EMBL" id="L24470">
    <property type="protein sequence ID" value="AAA17684.1"/>
    <property type="molecule type" value="mRNA"/>
</dbReference>
<dbReference type="EMBL" id="AF004021">
    <property type="protein sequence ID" value="AAB63152.1"/>
    <property type="molecule type" value="mRNA"/>
</dbReference>
<dbReference type="EMBL" id="AY337000">
    <property type="protein sequence ID" value="AAQ76788.1"/>
    <property type="molecule type" value="mRNA"/>
</dbReference>
<dbReference type="EMBL" id="AY485530">
    <property type="protein sequence ID" value="AAR84381.1"/>
    <property type="molecule type" value="mRNA"/>
</dbReference>
<dbReference type="EMBL" id="AK292845">
    <property type="protein sequence ID" value="BAF85534.1"/>
    <property type="molecule type" value="mRNA"/>
</dbReference>
<dbReference type="EMBL" id="AC096531">
    <property type="status" value="NOT_ANNOTATED_CDS"/>
    <property type="molecule type" value="Genomic_DNA"/>
</dbReference>
<dbReference type="EMBL" id="AL158841">
    <property type="status" value="NOT_ANNOTATED_CDS"/>
    <property type="molecule type" value="Genomic_DNA"/>
</dbReference>
<dbReference type="EMBL" id="AL136324">
    <property type="status" value="NOT_ANNOTATED_CDS"/>
    <property type="molecule type" value="Genomic_DNA"/>
</dbReference>
<dbReference type="EMBL" id="CH471059">
    <property type="protein sequence ID" value="EAX06351.1"/>
    <property type="molecule type" value="Genomic_DNA"/>
</dbReference>
<dbReference type="EMBL" id="BC112965">
    <property type="protein sequence ID" value="AAI12966.1"/>
    <property type="molecule type" value="mRNA"/>
</dbReference>
<dbReference type="EMBL" id="AB041713">
    <property type="protein sequence ID" value="BAA94756.1"/>
    <property type="molecule type" value="Genomic_DNA"/>
</dbReference>
<dbReference type="CCDS" id="CCDS30759.1">
    <molecule id="P43088-2"/>
</dbReference>
<dbReference type="CCDS" id="CCDS686.1">
    <molecule id="P43088-1"/>
</dbReference>
<dbReference type="PIR" id="A49973">
    <property type="entry name" value="A49973"/>
</dbReference>
<dbReference type="RefSeq" id="NP_000950.1">
    <molecule id="P43088-1"/>
    <property type="nucleotide sequence ID" value="NM_000959.4"/>
</dbReference>
<dbReference type="RefSeq" id="NP_001034674.1">
    <molecule id="P43088-2"/>
    <property type="nucleotide sequence ID" value="NM_001039585.2"/>
</dbReference>
<dbReference type="RefSeq" id="XP_016857362.1">
    <molecule id="P43088-4"/>
    <property type="nucleotide sequence ID" value="XM_017001873.1"/>
</dbReference>
<dbReference type="RefSeq" id="XP_047282041.1">
    <molecule id="P43088-1"/>
    <property type="nucleotide sequence ID" value="XM_047426085.1"/>
</dbReference>
<dbReference type="RefSeq" id="XP_054193784.1">
    <molecule id="P43088-1"/>
    <property type="nucleotide sequence ID" value="XM_054337809.1"/>
</dbReference>
<dbReference type="RefSeq" id="XP_054193785.1">
    <molecule id="P43088-4"/>
    <property type="nucleotide sequence ID" value="XM_054337810.1"/>
</dbReference>
<dbReference type="PDB" id="8IQ4">
    <property type="method" value="EM"/>
    <property type="resolution" value="2.70 A"/>
    <property type="chains" value="R=1-359"/>
</dbReference>
<dbReference type="PDB" id="8IQ6">
    <property type="method" value="EM"/>
    <property type="resolution" value="3.40 A"/>
    <property type="chains" value="R=1-359"/>
</dbReference>
<dbReference type="PDB" id="8IUK">
    <property type="method" value="EM"/>
    <property type="resolution" value="2.67 A"/>
    <property type="chains" value="R=1-359"/>
</dbReference>
<dbReference type="PDB" id="8IUL">
    <property type="method" value="EM"/>
    <property type="resolution" value="2.78 A"/>
    <property type="chains" value="R=1-359"/>
</dbReference>
<dbReference type="PDB" id="8IUM">
    <property type="method" value="EM"/>
    <property type="resolution" value="3.14 A"/>
    <property type="chains" value="R=1-359"/>
</dbReference>
<dbReference type="PDB" id="8XJK">
    <property type="method" value="EM"/>
    <property type="resolution" value="2.63 A"/>
    <property type="chains" value="R=1-329"/>
</dbReference>
<dbReference type="PDB" id="8XJL">
    <property type="method" value="EM"/>
    <property type="resolution" value="2.77 A"/>
    <property type="chains" value="R=1-329"/>
</dbReference>
<dbReference type="PDB" id="8XJM">
    <property type="method" value="EM"/>
    <property type="resolution" value="2.85 A"/>
    <property type="chains" value="R=1-329"/>
</dbReference>
<dbReference type="PDBsum" id="8IQ4"/>
<dbReference type="PDBsum" id="8IQ6"/>
<dbReference type="PDBsum" id="8IUK"/>
<dbReference type="PDBsum" id="8IUL"/>
<dbReference type="PDBsum" id="8IUM"/>
<dbReference type="PDBsum" id="8XJK"/>
<dbReference type="PDBsum" id="8XJL"/>
<dbReference type="PDBsum" id="8XJM"/>
<dbReference type="EMDB" id="EMD-35657"/>
<dbReference type="EMDB" id="EMD-35658"/>
<dbReference type="EMDB" id="EMD-35724"/>
<dbReference type="EMDB" id="EMD-35725"/>
<dbReference type="EMDB" id="EMD-35726"/>
<dbReference type="EMDB" id="EMD-38399"/>
<dbReference type="EMDB" id="EMD-38400"/>
<dbReference type="EMDB" id="EMD-38401"/>
<dbReference type="SMR" id="P43088"/>
<dbReference type="BioGRID" id="111709">
    <property type="interactions" value="24"/>
</dbReference>
<dbReference type="CORUM" id="P43088"/>
<dbReference type="FunCoup" id="P43088">
    <property type="interactions" value="1114"/>
</dbReference>
<dbReference type="IntAct" id="P43088">
    <property type="interactions" value="9"/>
</dbReference>
<dbReference type="STRING" id="9606.ENSP00000359793"/>
<dbReference type="BindingDB" id="P43088"/>
<dbReference type="ChEMBL" id="CHEMBL1987"/>
<dbReference type="DrugBank" id="DB00905">
    <property type="generic name" value="Bimatoprost"/>
</dbReference>
<dbReference type="DrugBank" id="DB00429">
    <property type="generic name" value="Carboprost tromethamine"/>
</dbReference>
<dbReference type="DrugBank" id="DB11507">
    <property type="generic name" value="Cloprostenol"/>
</dbReference>
<dbReference type="DrugBank" id="DB12789">
    <property type="generic name" value="Dinoprost"/>
</dbReference>
<dbReference type="DrugBank" id="DB01160">
    <property type="generic name" value="Dinoprost tromethamine"/>
</dbReference>
<dbReference type="DrugBank" id="DB00917">
    <property type="generic name" value="Dinoprostone"/>
</dbReference>
<dbReference type="DrugBank" id="DB11519">
    <property type="generic name" value="Fluprostenol"/>
</dbReference>
<dbReference type="DrugBank" id="DB11629">
    <property type="generic name" value="Laropiprant"/>
</dbReference>
<dbReference type="DrugBank" id="DB00654">
    <property type="generic name" value="Latanoprost"/>
</dbReference>
<dbReference type="DrugBank" id="DB11660">
    <property type="generic name" value="Latanoprostene bunod"/>
</dbReference>
<dbReference type="DrugBank" id="DB02056">
    <property type="generic name" value="Prostaglandin D2"/>
</dbReference>
<dbReference type="DrugBank" id="DB08819">
    <property type="generic name" value="Tafluprost"/>
</dbReference>
<dbReference type="DrugBank" id="DB00287">
    <property type="generic name" value="Travoprost"/>
</dbReference>
<dbReference type="DrugCentral" id="P43088"/>
<dbReference type="GuidetoPHARMACOLOGY" id="344"/>
<dbReference type="SwissLipids" id="SLP:000001573"/>
<dbReference type="GlyCosmos" id="P43088">
    <property type="glycosylation" value="2 sites, No reported glycans"/>
</dbReference>
<dbReference type="GlyGen" id="P43088">
    <property type="glycosylation" value="3 sites, 1 O-linked glycan (1 site)"/>
</dbReference>
<dbReference type="iPTMnet" id="P43088"/>
<dbReference type="PhosphoSitePlus" id="P43088"/>
<dbReference type="SwissPalm" id="P43088"/>
<dbReference type="BioMuta" id="PTGFR"/>
<dbReference type="DMDM" id="1172442"/>
<dbReference type="MassIVE" id="P43088"/>
<dbReference type="PaxDb" id="9606-ENSP00000359793"/>
<dbReference type="PeptideAtlas" id="P43088"/>
<dbReference type="ProteomicsDB" id="55578">
    <molecule id="P43088-1"/>
</dbReference>
<dbReference type="Antibodypedia" id="19743">
    <property type="antibodies" value="183 antibodies from 28 providers"/>
</dbReference>
<dbReference type="DNASU" id="5737"/>
<dbReference type="Ensembl" id="ENST00000370756.3">
    <molecule id="P43088-2"/>
    <property type="protein sequence ID" value="ENSP00000359792.3"/>
    <property type="gene ID" value="ENSG00000122420.10"/>
</dbReference>
<dbReference type="Ensembl" id="ENST00000370757.8">
    <molecule id="P43088-1"/>
    <property type="protein sequence ID" value="ENSP00000359793.3"/>
    <property type="gene ID" value="ENSG00000122420.10"/>
</dbReference>
<dbReference type="Ensembl" id="ENST00000370758.5">
    <molecule id="P43088-1"/>
    <property type="protein sequence ID" value="ENSP00000359794.1"/>
    <property type="gene ID" value="ENSG00000122420.10"/>
</dbReference>
<dbReference type="GeneID" id="5737"/>
<dbReference type="KEGG" id="hsa:5737"/>
<dbReference type="MANE-Select" id="ENST00000370757.8">
    <property type="protein sequence ID" value="ENSP00000359793.3"/>
    <property type="RefSeq nucleotide sequence ID" value="NM_000959.4"/>
    <property type="RefSeq protein sequence ID" value="NP_000950.1"/>
</dbReference>
<dbReference type="UCSC" id="uc001dim.4">
    <molecule id="P43088-1"/>
    <property type="organism name" value="human"/>
</dbReference>
<dbReference type="AGR" id="HGNC:9600"/>
<dbReference type="CTD" id="5737"/>
<dbReference type="DisGeNET" id="5737"/>
<dbReference type="GeneCards" id="PTGFR"/>
<dbReference type="HGNC" id="HGNC:9600">
    <property type="gene designation" value="PTGFR"/>
</dbReference>
<dbReference type="HPA" id="ENSG00000122420">
    <property type="expression patterns" value="Tissue enhanced (tongue)"/>
</dbReference>
<dbReference type="MalaCards" id="PTGFR"/>
<dbReference type="MIM" id="600563">
    <property type="type" value="gene"/>
</dbReference>
<dbReference type="neXtProt" id="NX_P43088"/>
<dbReference type="OpenTargets" id="ENSG00000122420"/>
<dbReference type="PharmGKB" id="PA290"/>
<dbReference type="VEuPathDB" id="HostDB:ENSG00000122420"/>
<dbReference type="eggNOG" id="KOG3656">
    <property type="taxonomic scope" value="Eukaryota"/>
</dbReference>
<dbReference type="GeneTree" id="ENSGT01030000234559"/>
<dbReference type="HOGENOM" id="CLU_045991_3_0_1"/>
<dbReference type="InParanoid" id="P43088"/>
<dbReference type="OMA" id="ILGHRNY"/>
<dbReference type="OrthoDB" id="5959154at2759"/>
<dbReference type="PAN-GO" id="P43088">
    <property type="GO annotations" value="5 GO annotations based on evolutionary models"/>
</dbReference>
<dbReference type="PhylomeDB" id="P43088"/>
<dbReference type="TreeFam" id="TF324982"/>
<dbReference type="PathwayCommons" id="P43088"/>
<dbReference type="Reactome" id="R-HSA-391908">
    <property type="pathway name" value="Prostanoid ligand receptors"/>
</dbReference>
<dbReference type="Reactome" id="R-HSA-416476">
    <property type="pathway name" value="G alpha (q) signalling events"/>
</dbReference>
<dbReference type="SignaLink" id="P43088"/>
<dbReference type="SIGNOR" id="P43088"/>
<dbReference type="BioGRID-ORCS" id="5737">
    <property type="hits" value="13 hits in 1156 CRISPR screens"/>
</dbReference>
<dbReference type="ChiTaRS" id="PTGFR">
    <property type="organism name" value="human"/>
</dbReference>
<dbReference type="GeneWiki" id="Prostaglandin_F_receptor"/>
<dbReference type="GenomeRNAi" id="5737"/>
<dbReference type="Pharos" id="P43088">
    <property type="development level" value="Tclin"/>
</dbReference>
<dbReference type="PRO" id="PR:P43088"/>
<dbReference type="Proteomes" id="UP000005640">
    <property type="component" value="Chromosome 1"/>
</dbReference>
<dbReference type="RNAct" id="P43088">
    <property type="molecule type" value="protein"/>
</dbReference>
<dbReference type="Bgee" id="ENSG00000122420">
    <property type="expression patterns" value="Expressed in calcaneal tendon and 137 other cell types or tissues"/>
</dbReference>
<dbReference type="ExpressionAtlas" id="P43088">
    <property type="expression patterns" value="baseline and differential"/>
</dbReference>
<dbReference type="GO" id="GO:0005737">
    <property type="term" value="C:cytoplasm"/>
    <property type="evidence" value="ECO:0000314"/>
    <property type="project" value="UniProtKB"/>
</dbReference>
<dbReference type="GO" id="GO:0005576">
    <property type="term" value="C:extracellular region"/>
    <property type="evidence" value="ECO:0000314"/>
    <property type="project" value="MGI"/>
</dbReference>
<dbReference type="GO" id="GO:0005886">
    <property type="term" value="C:plasma membrane"/>
    <property type="evidence" value="ECO:0000314"/>
    <property type="project" value="UniProtKB"/>
</dbReference>
<dbReference type="GO" id="GO:0004958">
    <property type="term" value="F:prostaglandin F receptor activity"/>
    <property type="evidence" value="ECO:0000314"/>
    <property type="project" value="UniProtKB"/>
</dbReference>
<dbReference type="GO" id="GO:0007189">
    <property type="term" value="P:adenylate cyclase-activating G protein-coupled receptor signaling pathway"/>
    <property type="evidence" value="ECO:0000318"/>
    <property type="project" value="GO_Central"/>
</dbReference>
<dbReference type="GO" id="GO:0071799">
    <property type="term" value="P:cellular response to prostaglandin D stimulus"/>
    <property type="evidence" value="ECO:0000315"/>
    <property type="project" value="UniProtKB"/>
</dbReference>
<dbReference type="GO" id="GO:0007186">
    <property type="term" value="P:G protein-coupled receptor signaling pathway"/>
    <property type="evidence" value="ECO:0000304"/>
    <property type="project" value="ProtInc"/>
</dbReference>
<dbReference type="GO" id="GO:0006954">
    <property type="term" value="P:inflammatory response"/>
    <property type="evidence" value="ECO:0000318"/>
    <property type="project" value="GO_Central"/>
</dbReference>
<dbReference type="GO" id="GO:0043066">
    <property type="term" value="P:negative regulation of apoptotic process"/>
    <property type="evidence" value="ECO:0007669"/>
    <property type="project" value="Ensembl"/>
</dbReference>
<dbReference type="GO" id="GO:0007567">
    <property type="term" value="P:parturition"/>
    <property type="evidence" value="ECO:0000304"/>
    <property type="project" value="ProtInc"/>
</dbReference>
<dbReference type="GO" id="GO:0008284">
    <property type="term" value="P:positive regulation of cell population proliferation"/>
    <property type="evidence" value="ECO:0000315"/>
    <property type="project" value="UniProtKB"/>
</dbReference>
<dbReference type="GO" id="GO:0007204">
    <property type="term" value="P:positive regulation of cytosolic calcium ion concentration"/>
    <property type="evidence" value="ECO:0000318"/>
    <property type="project" value="GO_Central"/>
</dbReference>
<dbReference type="GO" id="GO:0010628">
    <property type="term" value="P:positive regulation of gene expression"/>
    <property type="evidence" value="ECO:0007669"/>
    <property type="project" value="Ensembl"/>
</dbReference>
<dbReference type="GO" id="GO:0032355">
    <property type="term" value="P:response to estradiol"/>
    <property type="evidence" value="ECO:0007669"/>
    <property type="project" value="Ensembl"/>
</dbReference>
<dbReference type="GO" id="GO:0032496">
    <property type="term" value="P:response to lipopolysaccharide"/>
    <property type="evidence" value="ECO:0007669"/>
    <property type="project" value="Ensembl"/>
</dbReference>
<dbReference type="CDD" id="cd15145">
    <property type="entry name" value="7tmA_FP"/>
    <property type="match status" value="1"/>
</dbReference>
<dbReference type="FunFam" id="1.20.1070.10:FF:000129">
    <property type="entry name" value="Prostaglandin F2-alpha receptor"/>
    <property type="match status" value="1"/>
</dbReference>
<dbReference type="Gene3D" id="1.20.1070.10">
    <property type="entry name" value="Rhodopsin 7-helix transmembrane proteins"/>
    <property type="match status" value="1"/>
</dbReference>
<dbReference type="InterPro" id="IPR000276">
    <property type="entry name" value="GPCR_Rhodpsn"/>
</dbReference>
<dbReference type="InterPro" id="IPR017452">
    <property type="entry name" value="GPCR_Rhodpsn_7TM"/>
</dbReference>
<dbReference type="InterPro" id="IPR000141">
    <property type="entry name" value="PglndnF_rcpt"/>
</dbReference>
<dbReference type="InterPro" id="IPR008365">
    <property type="entry name" value="Prostanoid_rcpt"/>
</dbReference>
<dbReference type="PANTHER" id="PTHR11866">
    <property type="entry name" value="G-PROTEIN COUPLED RECEPTOR FAMILY 1 MEMBER"/>
    <property type="match status" value="1"/>
</dbReference>
<dbReference type="PANTHER" id="PTHR11866:SF4">
    <property type="entry name" value="PROSTAGLANDIN F2-ALPHA RECEPTOR"/>
    <property type="match status" value="1"/>
</dbReference>
<dbReference type="Pfam" id="PF00001">
    <property type="entry name" value="7tm_1"/>
    <property type="match status" value="1"/>
</dbReference>
<dbReference type="PRINTS" id="PR00237">
    <property type="entry name" value="GPCRRHODOPSN"/>
</dbReference>
<dbReference type="PRINTS" id="PR01788">
    <property type="entry name" value="PROSTANOIDR"/>
</dbReference>
<dbReference type="PRINTS" id="PR00855">
    <property type="entry name" value="PRSTNOIDFPR"/>
</dbReference>
<dbReference type="SUPFAM" id="SSF81321">
    <property type="entry name" value="Family A G protein-coupled receptor-like"/>
    <property type="match status" value="1"/>
</dbReference>
<dbReference type="PROSITE" id="PS00237">
    <property type="entry name" value="G_PROTEIN_RECEP_F1_1"/>
    <property type="match status" value="1"/>
</dbReference>
<dbReference type="PROSITE" id="PS50262">
    <property type="entry name" value="G_PROTEIN_RECEP_F1_2"/>
    <property type="match status" value="1"/>
</dbReference>
<reference key="1">
    <citation type="journal article" date="1994" name="J. Biol. Chem.">
        <title>Cloning and expression of a cDNA for the human prostanoid FP receptor.</title>
        <authorList>
            <person name="Abramovitz M."/>
            <person name="Boie Y."/>
            <person name="Nguyen T."/>
            <person name="Rushmore T.H."/>
            <person name="Bayne M.A."/>
            <person name="Metters K.M."/>
            <person name="Slipetz D.M."/>
            <person name="Grygorczyk R."/>
        </authorList>
    </citation>
    <scope>NUCLEOTIDE SEQUENCE [MRNA] (ISOFORM 1)</scope>
    <source>
        <tissue>Uterus</tissue>
    </source>
</reference>
<reference key="2">
    <citation type="journal article" date="1997" name="J. Biol. Chem.">
        <title>Functional characterization of the ocular prostaglandin f2alpha (PGF2alpha) receptor. Activation by the isoprostane, 12-iso-PGF2alpha.</title>
        <authorList>
            <person name="Kunapuli P."/>
            <person name="Lawson J.A."/>
            <person name="Rokach J."/>
            <person name="FitzGerald G.A."/>
        </authorList>
    </citation>
    <scope>NUCLEOTIDE SEQUENCE [MRNA] (ISOFORM 1)</scope>
    <source>
        <tissue>Ocular ciliary body</tissue>
    </source>
</reference>
<reference key="3">
    <citation type="submission" date="2003-07" db="EMBL/GenBank/DDBJ databases">
        <title>cDNA clones of human proteins involved in signal transduction sequenced by the Guthrie cDNA resource center (www.cdna.org).</title>
        <authorList>
            <person name="Kopatz S.A."/>
            <person name="Aronstam R.S."/>
            <person name="Sharma S.V."/>
        </authorList>
    </citation>
    <scope>NUCLEOTIDE SEQUENCE [LARGE SCALE MRNA] (ISOFORM 1)</scope>
    <source>
        <tissue>Placenta</tissue>
    </source>
</reference>
<reference key="4">
    <citation type="journal article" date="2004" name="Arch. Biochem. Biophys.">
        <title>Cloning and localization of hFP(S): a six-transmembrane mRNA splice variant of the human FP prostanoid receptor.</title>
        <authorList>
            <person name="Vielhauer G.A."/>
            <person name="Fujino H."/>
            <person name="Regan J.W."/>
        </authorList>
    </citation>
    <scope>NUCLEOTIDE SEQUENCE [MRNA] (ISOFORM 2)</scope>
    <scope>ALTERNATIVE SPLICING</scope>
</reference>
<reference key="5">
    <citation type="journal article" date="2004" name="Nat. Genet.">
        <title>Complete sequencing and characterization of 21,243 full-length human cDNAs.</title>
        <authorList>
            <person name="Ota T."/>
            <person name="Suzuki Y."/>
            <person name="Nishikawa T."/>
            <person name="Otsuki T."/>
            <person name="Sugiyama T."/>
            <person name="Irie R."/>
            <person name="Wakamatsu A."/>
            <person name="Hayashi K."/>
            <person name="Sato H."/>
            <person name="Nagai K."/>
            <person name="Kimura K."/>
            <person name="Makita H."/>
            <person name="Sekine M."/>
            <person name="Obayashi M."/>
            <person name="Nishi T."/>
            <person name="Shibahara T."/>
            <person name="Tanaka T."/>
            <person name="Ishii S."/>
            <person name="Yamamoto J."/>
            <person name="Saito K."/>
            <person name="Kawai Y."/>
            <person name="Isono Y."/>
            <person name="Nakamura Y."/>
            <person name="Nagahari K."/>
            <person name="Murakami K."/>
            <person name="Yasuda T."/>
            <person name="Iwayanagi T."/>
            <person name="Wagatsuma M."/>
            <person name="Shiratori A."/>
            <person name="Sudo H."/>
            <person name="Hosoiri T."/>
            <person name="Kaku Y."/>
            <person name="Kodaira H."/>
            <person name="Kondo H."/>
            <person name="Sugawara M."/>
            <person name="Takahashi M."/>
            <person name="Kanda K."/>
            <person name="Yokoi T."/>
            <person name="Furuya T."/>
            <person name="Kikkawa E."/>
            <person name="Omura Y."/>
            <person name="Abe K."/>
            <person name="Kamihara K."/>
            <person name="Katsuta N."/>
            <person name="Sato K."/>
            <person name="Tanikawa M."/>
            <person name="Yamazaki M."/>
            <person name="Ninomiya K."/>
            <person name="Ishibashi T."/>
            <person name="Yamashita H."/>
            <person name="Murakawa K."/>
            <person name="Fujimori K."/>
            <person name="Tanai H."/>
            <person name="Kimata M."/>
            <person name="Watanabe M."/>
            <person name="Hiraoka S."/>
            <person name="Chiba Y."/>
            <person name="Ishida S."/>
            <person name="Ono Y."/>
            <person name="Takiguchi S."/>
            <person name="Watanabe S."/>
            <person name="Yosida M."/>
            <person name="Hotuta T."/>
            <person name="Kusano J."/>
            <person name="Kanehori K."/>
            <person name="Takahashi-Fujii A."/>
            <person name="Hara H."/>
            <person name="Tanase T.-O."/>
            <person name="Nomura Y."/>
            <person name="Togiya S."/>
            <person name="Komai F."/>
            <person name="Hara R."/>
            <person name="Takeuchi K."/>
            <person name="Arita M."/>
            <person name="Imose N."/>
            <person name="Musashino K."/>
            <person name="Yuuki H."/>
            <person name="Oshima A."/>
            <person name="Sasaki N."/>
            <person name="Aotsuka S."/>
            <person name="Yoshikawa Y."/>
            <person name="Matsunawa H."/>
            <person name="Ichihara T."/>
            <person name="Shiohata N."/>
            <person name="Sano S."/>
            <person name="Moriya S."/>
            <person name="Momiyama H."/>
            <person name="Satoh N."/>
            <person name="Takami S."/>
            <person name="Terashima Y."/>
            <person name="Suzuki O."/>
            <person name="Nakagawa S."/>
            <person name="Senoh A."/>
            <person name="Mizoguchi H."/>
            <person name="Goto Y."/>
            <person name="Shimizu F."/>
            <person name="Wakebe H."/>
            <person name="Hishigaki H."/>
            <person name="Watanabe T."/>
            <person name="Sugiyama A."/>
            <person name="Takemoto M."/>
            <person name="Kawakami B."/>
            <person name="Yamazaki M."/>
            <person name="Watanabe K."/>
            <person name="Kumagai A."/>
            <person name="Itakura S."/>
            <person name="Fukuzumi Y."/>
            <person name="Fujimori Y."/>
            <person name="Komiyama M."/>
            <person name="Tashiro H."/>
            <person name="Tanigami A."/>
            <person name="Fujiwara T."/>
            <person name="Ono T."/>
            <person name="Yamada K."/>
            <person name="Fujii Y."/>
            <person name="Ozaki K."/>
            <person name="Hirao M."/>
            <person name="Ohmori Y."/>
            <person name="Kawabata A."/>
            <person name="Hikiji T."/>
            <person name="Kobatake N."/>
            <person name="Inagaki H."/>
            <person name="Ikema Y."/>
            <person name="Okamoto S."/>
            <person name="Okitani R."/>
            <person name="Kawakami T."/>
            <person name="Noguchi S."/>
            <person name="Itoh T."/>
            <person name="Shigeta K."/>
            <person name="Senba T."/>
            <person name="Matsumura K."/>
            <person name="Nakajima Y."/>
            <person name="Mizuno T."/>
            <person name="Morinaga M."/>
            <person name="Sasaki M."/>
            <person name="Togashi T."/>
            <person name="Oyama M."/>
            <person name="Hata H."/>
            <person name="Watanabe M."/>
            <person name="Komatsu T."/>
            <person name="Mizushima-Sugano J."/>
            <person name="Satoh T."/>
            <person name="Shirai Y."/>
            <person name="Takahashi Y."/>
            <person name="Nakagawa K."/>
            <person name="Okumura K."/>
            <person name="Nagase T."/>
            <person name="Nomura N."/>
            <person name="Kikuchi H."/>
            <person name="Masuho Y."/>
            <person name="Yamashita R."/>
            <person name="Nakai K."/>
            <person name="Yada T."/>
            <person name="Nakamura Y."/>
            <person name="Ohara O."/>
            <person name="Isogai T."/>
            <person name="Sugano S."/>
        </authorList>
    </citation>
    <scope>NUCLEOTIDE SEQUENCE [LARGE SCALE MRNA] (ISOFORM 1)</scope>
    <source>
        <tissue>Trachea</tissue>
    </source>
</reference>
<reference key="6">
    <citation type="journal article" date="2006" name="Nature">
        <title>The DNA sequence and biological annotation of human chromosome 1.</title>
        <authorList>
            <person name="Gregory S.G."/>
            <person name="Barlow K.F."/>
            <person name="McLay K.E."/>
            <person name="Kaul R."/>
            <person name="Swarbreck D."/>
            <person name="Dunham A."/>
            <person name="Scott C.E."/>
            <person name="Howe K.L."/>
            <person name="Woodfine K."/>
            <person name="Spencer C.C.A."/>
            <person name="Jones M.C."/>
            <person name="Gillson C."/>
            <person name="Searle S."/>
            <person name="Zhou Y."/>
            <person name="Kokocinski F."/>
            <person name="McDonald L."/>
            <person name="Evans R."/>
            <person name="Phillips K."/>
            <person name="Atkinson A."/>
            <person name="Cooper R."/>
            <person name="Jones C."/>
            <person name="Hall R.E."/>
            <person name="Andrews T.D."/>
            <person name="Lloyd C."/>
            <person name="Ainscough R."/>
            <person name="Almeida J.P."/>
            <person name="Ambrose K.D."/>
            <person name="Anderson F."/>
            <person name="Andrew R.W."/>
            <person name="Ashwell R.I.S."/>
            <person name="Aubin K."/>
            <person name="Babbage A.K."/>
            <person name="Bagguley C.L."/>
            <person name="Bailey J."/>
            <person name="Beasley H."/>
            <person name="Bethel G."/>
            <person name="Bird C.P."/>
            <person name="Bray-Allen S."/>
            <person name="Brown J.Y."/>
            <person name="Brown A.J."/>
            <person name="Buckley D."/>
            <person name="Burton J."/>
            <person name="Bye J."/>
            <person name="Carder C."/>
            <person name="Chapman J.C."/>
            <person name="Clark S.Y."/>
            <person name="Clarke G."/>
            <person name="Clee C."/>
            <person name="Cobley V."/>
            <person name="Collier R.E."/>
            <person name="Corby N."/>
            <person name="Coville G.J."/>
            <person name="Davies J."/>
            <person name="Deadman R."/>
            <person name="Dunn M."/>
            <person name="Earthrowl M."/>
            <person name="Ellington A.G."/>
            <person name="Errington H."/>
            <person name="Frankish A."/>
            <person name="Frankland J."/>
            <person name="French L."/>
            <person name="Garner P."/>
            <person name="Garnett J."/>
            <person name="Gay L."/>
            <person name="Ghori M.R.J."/>
            <person name="Gibson R."/>
            <person name="Gilby L.M."/>
            <person name="Gillett W."/>
            <person name="Glithero R.J."/>
            <person name="Grafham D.V."/>
            <person name="Griffiths C."/>
            <person name="Griffiths-Jones S."/>
            <person name="Grocock R."/>
            <person name="Hammond S."/>
            <person name="Harrison E.S.I."/>
            <person name="Hart E."/>
            <person name="Haugen E."/>
            <person name="Heath P.D."/>
            <person name="Holmes S."/>
            <person name="Holt K."/>
            <person name="Howden P.J."/>
            <person name="Hunt A.R."/>
            <person name="Hunt S.E."/>
            <person name="Hunter G."/>
            <person name="Isherwood J."/>
            <person name="James R."/>
            <person name="Johnson C."/>
            <person name="Johnson D."/>
            <person name="Joy A."/>
            <person name="Kay M."/>
            <person name="Kershaw J.K."/>
            <person name="Kibukawa M."/>
            <person name="Kimberley A.M."/>
            <person name="King A."/>
            <person name="Knights A.J."/>
            <person name="Lad H."/>
            <person name="Laird G."/>
            <person name="Lawlor S."/>
            <person name="Leongamornlert D.A."/>
            <person name="Lloyd D.M."/>
            <person name="Loveland J."/>
            <person name="Lovell J."/>
            <person name="Lush M.J."/>
            <person name="Lyne R."/>
            <person name="Martin S."/>
            <person name="Mashreghi-Mohammadi M."/>
            <person name="Matthews L."/>
            <person name="Matthews N.S.W."/>
            <person name="McLaren S."/>
            <person name="Milne S."/>
            <person name="Mistry S."/>
            <person name="Moore M.J.F."/>
            <person name="Nickerson T."/>
            <person name="O'Dell C.N."/>
            <person name="Oliver K."/>
            <person name="Palmeiri A."/>
            <person name="Palmer S.A."/>
            <person name="Parker A."/>
            <person name="Patel D."/>
            <person name="Pearce A.V."/>
            <person name="Peck A.I."/>
            <person name="Pelan S."/>
            <person name="Phelps K."/>
            <person name="Phillimore B.J."/>
            <person name="Plumb R."/>
            <person name="Rajan J."/>
            <person name="Raymond C."/>
            <person name="Rouse G."/>
            <person name="Saenphimmachak C."/>
            <person name="Sehra H.K."/>
            <person name="Sheridan E."/>
            <person name="Shownkeen R."/>
            <person name="Sims S."/>
            <person name="Skuce C.D."/>
            <person name="Smith M."/>
            <person name="Steward C."/>
            <person name="Subramanian S."/>
            <person name="Sycamore N."/>
            <person name="Tracey A."/>
            <person name="Tromans A."/>
            <person name="Van Helmond Z."/>
            <person name="Wall M."/>
            <person name="Wallis J.M."/>
            <person name="White S."/>
            <person name="Whitehead S.L."/>
            <person name="Wilkinson J.E."/>
            <person name="Willey D.L."/>
            <person name="Williams H."/>
            <person name="Wilming L."/>
            <person name="Wray P.W."/>
            <person name="Wu Z."/>
            <person name="Coulson A."/>
            <person name="Vaudin M."/>
            <person name="Sulston J.E."/>
            <person name="Durbin R.M."/>
            <person name="Hubbard T."/>
            <person name="Wooster R."/>
            <person name="Dunham I."/>
            <person name="Carter N.P."/>
            <person name="McVean G."/>
            <person name="Ross M.T."/>
            <person name="Harrow J."/>
            <person name="Olson M.V."/>
            <person name="Beck S."/>
            <person name="Rogers J."/>
            <person name="Bentley D.R."/>
        </authorList>
    </citation>
    <scope>NUCLEOTIDE SEQUENCE [LARGE SCALE GENOMIC DNA]</scope>
</reference>
<reference key="7">
    <citation type="submission" date="2005-09" db="EMBL/GenBank/DDBJ databases">
        <authorList>
            <person name="Mural R.J."/>
            <person name="Istrail S."/>
            <person name="Sutton G."/>
            <person name="Florea L."/>
            <person name="Halpern A.L."/>
            <person name="Mobarry C.M."/>
            <person name="Lippert R."/>
            <person name="Walenz B."/>
            <person name="Shatkay H."/>
            <person name="Dew I."/>
            <person name="Miller J.R."/>
            <person name="Flanigan M.J."/>
            <person name="Edwards N.J."/>
            <person name="Bolanos R."/>
            <person name="Fasulo D."/>
            <person name="Halldorsson B.V."/>
            <person name="Hannenhalli S."/>
            <person name="Turner R."/>
            <person name="Yooseph S."/>
            <person name="Lu F."/>
            <person name="Nusskern D.R."/>
            <person name="Shue B.C."/>
            <person name="Zheng X.H."/>
            <person name="Zhong F."/>
            <person name="Delcher A.L."/>
            <person name="Huson D.H."/>
            <person name="Kravitz S.A."/>
            <person name="Mouchard L."/>
            <person name="Reinert K."/>
            <person name="Remington K.A."/>
            <person name="Clark A.G."/>
            <person name="Waterman M.S."/>
            <person name="Eichler E.E."/>
            <person name="Adams M.D."/>
            <person name="Hunkapiller M.W."/>
            <person name="Myers E.W."/>
            <person name="Venter J.C."/>
        </authorList>
    </citation>
    <scope>NUCLEOTIDE SEQUENCE [LARGE SCALE GENOMIC DNA]</scope>
</reference>
<reference key="8">
    <citation type="journal article" date="2004" name="Genome Res.">
        <title>The status, quality, and expansion of the NIH full-length cDNA project: the Mammalian Gene Collection (MGC).</title>
        <authorList>
            <consortium name="The MGC Project Team"/>
        </authorList>
    </citation>
    <scope>NUCLEOTIDE SEQUENCE [LARGE SCALE MRNA] (ISOFORM 1)</scope>
</reference>
<reference key="9">
    <citation type="submission" date="2000-04" db="EMBL/GenBank/DDBJ databases">
        <title>Structure of human prostaglandin F2alpha receptor gene.</title>
        <authorList>
            <person name="Nishizawa M."/>
            <person name="Ito S."/>
        </authorList>
    </citation>
    <scope>NUCLEOTIDE SEQUENCE [GENOMIC DNA] OF 1-266</scope>
    <source>
        <tissue>Liver</tissue>
    </source>
</reference>
<reference key="10">
    <citation type="journal article" date="2008" name="Br. J. Pharmacol.">
        <title>Identification and pharmacological characterization of the prostaglandin FP receptor and FP receptor variant complexes.</title>
        <authorList>
            <person name="Liang Y."/>
            <person name="Woodward D.F."/>
            <person name="Guzman V.M."/>
            <person name="Li C."/>
            <person name="Scott D.F."/>
            <person name="Wang J.W."/>
            <person name="Wheeler L.A."/>
            <person name="Garst M.E."/>
            <person name="Landsverk K."/>
            <person name="Sachs G."/>
            <person name="Krauss A.H."/>
            <person name="Cornell C."/>
            <person name="Martos J."/>
            <person name="Pettit S."/>
            <person name="Fliri H."/>
        </authorList>
    </citation>
    <scope>FUNCTION</scope>
    <scope>TISSUE SPECIFICITY</scope>
    <scope>ALTERNATIVE SPLICING</scope>
    <scope>SUBUNIT</scope>
</reference>
<comment type="function">
    <text evidence="1 4">Receptor for prostaglandin F2-alpha (PGF2-alpha). The activity of this receptor is mediated by G proteins which activate a phosphatidylinositol-calcium second messenger system. Initiates luteolysis in the corpus luteum (By similarity). Isoforms 2 to 7 do not bind PGF2-alpha but are proposed to modulate signaling by participating in variant receptor complexes; heterodimers between isoform 1 and isoform 5 are proposed to be a receptor for prostamides including the synthetic analog bimatoprost.</text>
</comment>
<comment type="subunit">
    <text evidence="4">Isoform 1 can form heterodimers with isoform 5 (and probably other isoforms).</text>
</comment>
<comment type="subcellular location">
    <subcellularLocation>
        <location>Cell membrane</location>
        <topology>Multi-pass membrane protein</topology>
    </subcellularLocation>
</comment>
<comment type="alternative products">
    <event type="alternative splicing"/>
    <isoform>
        <id>P43088-1</id>
        <name>1</name>
        <sequence type="displayed"/>
    </isoform>
    <isoform>
        <id>P43088-2</id>
        <name>2</name>
        <name>FP(S)</name>
        <name>VAR-1</name>
        <sequence type="described" ref="VSP_042025"/>
    </isoform>
    <isoform>
        <id>P43088-3</id>
        <name>3</name>
        <name>VAR-2</name>
        <sequence type="described" ref="VSP_053589 VSP_053595"/>
    </isoform>
    <isoform>
        <id>P43088-4</id>
        <name>4</name>
        <name>VAR-3</name>
        <sequence type="described" ref="VSP_053588 VSP_053596"/>
    </isoform>
    <isoform>
        <id>P43088-5</id>
        <name>5</name>
        <name>altFP4</name>
        <name>VAR-4</name>
        <sequence type="described" ref="VSP_053593 VSP_053597"/>
    </isoform>
    <isoform>
        <id>P43088-6</id>
        <name>6</name>
        <name>VAR-5</name>
        <sequence type="described" ref="VSP_053591 VSP_053592"/>
    </isoform>
    <isoform>
        <id>P43088-7</id>
        <name>7</name>
        <name>VAR-6</name>
        <sequence type="described" ref="VSP_053590 VSP_053594"/>
    </isoform>
</comment>
<comment type="tissue specificity">
    <text evidence="4">Eye.</text>
</comment>
<comment type="similarity">
    <text evidence="3">Belongs to the G-protein coupled receptor 1 family.</text>
</comment>
<organism>
    <name type="scientific">Homo sapiens</name>
    <name type="common">Human</name>
    <dbReference type="NCBI Taxonomy" id="9606"/>
    <lineage>
        <taxon>Eukaryota</taxon>
        <taxon>Metazoa</taxon>
        <taxon>Chordata</taxon>
        <taxon>Craniata</taxon>
        <taxon>Vertebrata</taxon>
        <taxon>Euteleostomi</taxon>
        <taxon>Mammalia</taxon>
        <taxon>Eutheria</taxon>
        <taxon>Euarchontoglires</taxon>
        <taxon>Primates</taxon>
        <taxon>Haplorrhini</taxon>
        <taxon>Catarrhini</taxon>
        <taxon>Hominidae</taxon>
        <taxon>Homo</taxon>
    </lineage>
</organism>
<keyword id="KW-0002">3D-structure</keyword>
<keyword id="KW-0025">Alternative splicing</keyword>
<keyword id="KW-1003">Cell membrane</keyword>
<keyword id="KW-1015">Disulfide bond</keyword>
<keyword id="KW-0297">G-protein coupled receptor</keyword>
<keyword id="KW-0325">Glycoprotein</keyword>
<keyword id="KW-0472">Membrane</keyword>
<keyword id="KW-1267">Proteomics identification</keyword>
<keyword id="KW-0675">Receptor</keyword>
<keyword id="KW-1185">Reference proteome</keyword>
<keyword id="KW-0807">Transducer</keyword>
<keyword id="KW-0812">Transmembrane</keyword>
<keyword id="KW-1133">Transmembrane helix</keyword>
<feature type="chain" id="PRO_0000070070" description="Prostaglandin F2-alpha receptor">
    <location>
        <begin position="1"/>
        <end position="359"/>
    </location>
</feature>
<feature type="topological domain" description="Extracellular" evidence="2">
    <location>
        <begin position="1"/>
        <end position="31"/>
    </location>
</feature>
<feature type="transmembrane region" description="Helical; Name=1" evidence="2">
    <location>
        <begin position="32"/>
        <end position="54"/>
    </location>
</feature>
<feature type="topological domain" description="Cytoplasmic" evidence="2">
    <location>
        <begin position="55"/>
        <end position="69"/>
    </location>
</feature>
<feature type="transmembrane region" description="Helical; Name=2" evidence="2">
    <location>
        <begin position="70"/>
        <end position="90"/>
    </location>
</feature>
<feature type="topological domain" description="Extracellular" evidence="2">
    <location>
        <begin position="91"/>
        <end position="109"/>
    </location>
</feature>
<feature type="transmembrane region" description="Helical; Name=3" evidence="2">
    <location>
        <begin position="110"/>
        <end position="131"/>
    </location>
</feature>
<feature type="topological domain" description="Cytoplasmic" evidence="2">
    <location>
        <begin position="132"/>
        <end position="152"/>
    </location>
</feature>
<feature type="transmembrane region" description="Helical; Name=4" evidence="2">
    <location>
        <begin position="153"/>
        <end position="175"/>
    </location>
</feature>
<feature type="topological domain" description="Extracellular" evidence="2">
    <location>
        <begin position="176"/>
        <end position="198"/>
    </location>
</feature>
<feature type="transmembrane region" description="Helical; Name=5" evidence="2">
    <location>
        <begin position="199"/>
        <end position="224"/>
    </location>
</feature>
<feature type="topological domain" description="Cytoplasmic" evidence="2">
    <location>
        <begin position="225"/>
        <end position="250"/>
    </location>
</feature>
<feature type="transmembrane region" description="Helical; Name=6" evidence="2">
    <location>
        <begin position="251"/>
        <end position="267"/>
    </location>
</feature>
<feature type="topological domain" description="Extracellular" evidence="2">
    <location>
        <begin position="268"/>
        <end position="285"/>
    </location>
</feature>
<feature type="transmembrane region" description="Helical; Name=7" evidence="2">
    <location>
        <begin position="286"/>
        <end position="307"/>
    </location>
</feature>
<feature type="topological domain" description="Cytoplasmic" evidence="2">
    <location>
        <begin position="308"/>
        <end position="359"/>
    </location>
</feature>
<feature type="glycosylation site" description="N-linked (GlcNAc...) asparagine" evidence="2">
    <location>
        <position position="4"/>
    </location>
</feature>
<feature type="glycosylation site" description="N-linked (GlcNAc...) asparagine" evidence="2">
    <location>
        <position position="19"/>
    </location>
</feature>
<feature type="disulfide bond" evidence="3">
    <location>
        <begin position="108"/>
        <end position="186"/>
    </location>
</feature>
<feature type="splice variant" id="VSP_042025" description="In isoform 2." evidence="5">
    <original>VTMANIGINGNHSLETCETTLFALRMATWNQILDPWVYILLRKAVLKNLYKLASQCCGVHVISLHIWELSSIKNSLKVAAISESPVAEKSAST</original>
    <variation>GYRIILNGKEKYKVYEEQSDFLHRLQWPTLE</variation>
    <location>
        <begin position="267"/>
        <end position="359"/>
    </location>
</feature>
<feature type="splice variant" id="VSP_053588" description="In isoform 4." evidence="6">
    <original>VTMANIGINGNHSLETCETTLFALR</original>
    <variation>GYRIILNGKEKYKVYEEQSDFLHRK</variation>
    <location>
        <begin position="267"/>
        <end position="291"/>
    </location>
</feature>
<feature type="splice variant" id="VSP_053589" description="In isoform 3." evidence="6">
    <original>VTMANIGIN</original>
    <variation>KIEGKIKVT</variation>
    <location>
        <begin position="267"/>
        <end position="275"/>
    </location>
</feature>
<feature type="splice variant" id="VSP_053590" description="In isoform 7." evidence="6">
    <original>VTMANIGI</original>
    <variation>THWGKEIP</variation>
    <location>
        <begin position="267"/>
        <end position="274"/>
    </location>
</feature>
<feature type="splice variant" id="VSP_053591" description="In isoform 6." evidence="6">
    <original>V</original>
    <variation>R</variation>
    <location>
        <position position="267"/>
    </location>
</feature>
<feature type="splice variant" id="VSP_053592" description="In isoform 6." evidence="6">
    <location>
        <begin position="268"/>
        <end position="359"/>
    </location>
</feature>
<feature type="splice variant" id="VSP_053593" description="In isoform 5." evidence="6">
    <original>TMANIGINGNHSLETCETTLFALRMATWN</original>
    <variation>KETHLQMRLWTWDFRVNALEDYCEGLTVF</variation>
    <location>
        <begin position="268"/>
        <end position="296"/>
    </location>
</feature>
<feature type="splice variant" id="VSP_053594" description="In isoform 7." evidence="6">
    <location>
        <begin position="275"/>
        <end position="359"/>
    </location>
</feature>
<feature type="splice variant" id="VSP_053595" description="In isoform 3." evidence="6">
    <location>
        <begin position="276"/>
        <end position="359"/>
    </location>
</feature>
<feature type="splice variant" id="VSP_053596" description="In isoform 4." evidence="6">
    <location>
        <begin position="292"/>
        <end position="359"/>
    </location>
</feature>
<feature type="splice variant" id="VSP_053597" description="In isoform 5." evidence="6">
    <location>
        <begin position="297"/>
        <end position="359"/>
    </location>
</feature>
<feature type="helix" evidence="7">
    <location>
        <begin position="31"/>
        <end position="58"/>
    </location>
</feature>
<feature type="turn" evidence="7">
    <location>
        <begin position="59"/>
        <end position="61"/>
    </location>
</feature>
<feature type="helix" evidence="7">
    <location>
        <begin position="65"/>
        <end position="92"/>
    </location>
</feature>
<feature type="turn" evidence="7">
    <location>
        <begin position="93"/>
        <end position="96"/>
    </location>
</feature>
<feature type="helix" evidence="7">
    <location>
        <begin position="98"/>
        <end position="101"/>
    </location>
</feature>
<feature type="strand" evidence="7">
    <location>
        <begin position="103"/>
        <end position="105"/>
    </location>
</feature>
<feature type="helix" evidence="7">
    <location>
        <begin position="107"/>
        <end position="138"/>
    </location>
</feature>
<feature type="helix" evidence="7">
    <location>
        <begin position="140"/>
        <end position="144"/>
    </location>
</feature>
<feature type="helix" evidence="7">
    <location>
        <begin position="149"/>
        <end position="167"/>
    </location>
</feature>
<feature type="turn" evidence="7">
    <location>
        <begin position="168"/>
        <end position="170"/>
    </location>
</feature>
<feature type="helix" evidence="7">
    <location>
        <begin position="171"/>
        <end position="173"/>
    </location>
</feature>
<feature type="strand" evidence="7">
    <location>
        <begin position="186"/>
        <end position="188"/>
    </location>
</feature>
<feature type="helix" evidence="7">
    <location>
        <begin position="196"/>
        <end position="233"/>
    </location>
</feature>
<feature type="turn" evidence="7">
    <location>
        <begin position="242"/>
        <end position="244"/>
    </location>
</feature>
<feature type="helix" evidence="7">
    <location>
        <begin position="245"/>
        <end position="275"/>
    </location>
</feature>
<feature type="helix" evidence="7">
    <location>
        <begin position="276"/>
        <end position="278"/>
    </location>
</feature>
<feature type="helix" evidence="7">
    <location>
        <begin position="283"/>
        <end position="298"/>
    </location>
</feature>
<feature type="helix" evidence="7">
    <location>
        <begin position="300"/>
        <end position="304"/>
    </location>
</feature>
<feature type="turn" evidence="7">
    <location>
        <begin position="305"/>
        <end position="307"/>
    </location>
</feature>
<feature type="helix" evidence="7">
    <location>
        <begin position="309"/>
        <end position="322"/>
    </location>
</feature>
<sequence>MSMNNSKQLVSPAAALLSNTTCQTENRLSVFFSVIFMTVGILSNSLAIAILMKAYQRFRQKSKASFLLLASGLVITDFFGHLINGAIAVFVYASDKEWIRFDQSNVLCSIFGICMVFSGLCPLLLGSVMAIERCIGVTKPIFHSTKITSKHVKMMLSGVCLFAVFIALLPILGHRDYKIQASRTWCFYNTEDIKDWEDRFYLLLFSFLGLLALGVSLLCNAITGITLLRVKFKSQQHRQGRSHHLEMVIQLLAIMCVSCICWSPFLVTMANIGINGNHSLETCETTLFALRMATWNQILDPWVYILLRKAVLKNLYKLASQCCGVHVISLHIWELSSIKNSLKVAAISESPVAEKSAST</sequence>
<gene>
    <name type="primary">PTGFR</name>
</gene>
<evidence type="ECO:0000250" key="1"/>
<evidence type="ECO:0000255" key="2"/>
<evidence type="ECO:0000255" key="3">
    <source>
        <dbReference type="PROSITE-ProRule" id="PRU00521"/>
    </source>
</evidence>
<evidence type="ECO:0000269" key="4">
    <source>
    </source>
</evidence>
<evidence type="ECO:0000303" key="5">
    <source>
    </source>
</evidence>
<evidence type="ECO:0000305" key="6"/>
<evidence type="ECO:0007829" key="7">
    <source>
        <dbReference type="PDB" id="8IUK"/>
    </source>
</evidence>